<keyword id="KW-0130">Cell adhesion</keyword>
<keyword id="KW-1015">Disulfide bond</keyword>
<keyword id="KW-0325">Glycoprotein</keyword>
<keyword id="KW-0472">Membrane</keyword>
<keyword id="KW-1185">Reference proteome</keyword>
<keyword id="KW-0812">Transmembrane</keyword>
<keyword id="KW-1133">Transmembrane helix</keyword>
<accession>O42583</accession>
<organism>
    <name type="scientific">Xenopus laevis</name>
    <name type="common">African clawed frog</name>
    <dbReference type="NCBI Taxonomy" id="8355"/>
    <lineage>
        <taxon>Eukaryota</taxon>
        <taxon>Metazoa</taxon>
        <taxon>Chordata</taxon>
        <taxon>Craniata</taxon>
        <taxon>Vertebrata</taxon>
        <taxon>Euteleostomi</taxon>
        <taxon>Amphibia</taxon>
        <taxon>Batrachia</taxon>
        <taxon>Anura</taxon>
        <taxon>Pipoidea</taxon>
        <taxon>Pipidae</taxon>
        <taxon>Xenopodinae</taxon>
        <taxon>Xenopus</taxon>
        <taxon>Xenopus</taxon>
    </lineage>
</organism>
<feature type="chain" id="PRO_0000168109" description="Peripherin-2">
    <location>
        <begin position="1"/>
        <end position="346"/>
    </location>
</feature>
<feature type="topological domain" description="Cytoplasmic" evidence="3">
    <location>
        <begin position="1"/>
        <end position="24"/>
    </location>
</feature>
<feature type="transmembrane region" description="Helical" evidence="3">
    <location>
        <begin position="25"/>
        <end position="43"/>
    </location>
</feature>
<feature type="topological domain" description="Lumenal" evidence="3">
    <location>
        <begin position="44"/>
        <end position="61"/>
    </location>
</feature>
<feature type="transmembrane region" description="Helical" evidence="3">
    <location>
        <begin position="62"/>
        <end position="80"/>
    </location>
</feature>
<feature type="topological domain" description="Cytoplasmic" evidence="3">
    <location>
        <begin position="81"/>
        <end position="99"/>
    </location>
</feature>
<feature type="transmembrane region" description="Helical" evidence="3">
    <location>
        <begin position="100"/>
        <end position="123"/>
    </location>
</feature>
<feature type="topological domain" description="Lumenal" evidence="3">
    <location>
        <begin position="124"/>
        <end position="264"/>
    </location>
</feature>
<feature type="transmembrane region" description="Helical" evidence="3">
    <location>
        <begin position="265"/>
        <end position="290"/>
    </location>
</feature>
<feature type="topological domain" description="Cytoplasmic" evidence="3">
    <location>
        <begin position="291"/>
        <end position="346"/>
    </location>
</feature>
<feature type="glycosylation site" description="N-linked (GlcNAc...) asparagine" evidence="3">
    <location>
        <position position="229"/>
    </location>
</feature>
<reference key="1">
    <citation type="journal article" date="1996" name="J. Cell Sci.">
        <title>Three homologs of rds/peripherin in Xenopus laevis photoreceptors that exhibit covalent and non-covalent interactions.</title>
        <authorList>
            <person name="Kedzierski W."/>
            <person name="Moghrabi W.N."/>
            <person name="Allen A.C."/>
            <person name="Jablonski-Stiemke M.M."/>
            <person name="Azarian S.M."/>
            <person name="Bok D."/>
            <person name="Travis G.H."/>
        </authorList>
    </citation>
    <scope>NUCLEOTIDE SEQUENCE [MRNA]</scope>
</reference>
<gene>
    <name type="primary">prph2</name>
    <name type="synonym">rds</name>
    <name type="synonym">rds38</name>
</gene>
<comment type="function">
    <text evidence="1">May be involved in the morphogenesis of retina outer segment disks and the development and maintenance of the retina ultrastructure.</text>
</comment>
<comment type="subunit">
    <text>Homodimer; disulfide-linked.</text>
</comment>
<comment type="subcellular location">
    <subcellularLocation>
        <location evidence="2">Membrane</location>
        <topology evidence="3">Multi-pass membrane protein</topology>
    </subcellularLocation>
</comment>
<comment type="tissue specificity">
    <text>Found in both rod and cone photoreceptors. Specifically in the rims and incisures of rod and cone outer segment disks.</text>
</comment>
<comment type="similarity">
    <text evidence="4">Belongs to the PRPH2/ROM1 family.</text>
</comment>
<evidence type="ECO:0000250" key="1">
    <source>
        <dbReference type="UniProtKB" id="P15499"/>
    </source>
</evidence>
<evidence type="ECO:0000250" key="2">
    <source>
        <dbReference type="UniProtKB" id="P17810"/>
    </source>
</evidence>
<evidence type="ECO:0000255" key="3"/>
<evidence type="ECO:0000305" key="4"/>
<name>PRPH2_XENLA</name>
<sequence length="346" mass="39308">MALMKTKFNLKRRVKLAQGLWLMNWCCVLAGIALFSMGVFLKIELRKRSEVMDNDESHFVPNSLILMGSLACALNAFPGKICYDSLDPTKFPRWKPMLKPYLIICLIFNIFIFFTGVVCFLTRGSLESTLAHGLKNGMRYYKDTDIPGRCFLKKTIDLLQIEFKCCGNNGFRDWFELQWVSNRYLGGRSKEVKDRIQSNVDGKYLIDGVPFSCCNPSSPRPCIQLQVTNNSAHYSYDHQTEELNLWSKGCKEALLNYYTSMMSSMGGMVFLVWIMEMAVMIGLRFLHTCLETIANPEDPECESEGWILEKSLKDTIKSSWELVKSMGKLNKVETAGGEEAGVATVS</sequence>
<dbReference type="EMBL" id="L79915">
    <property type="protein sequence ID" value="AAB64233.1"/>
    <property type="molecule type" value="mRNA"/>
</dbReference>
<dbReference type="RefSeq" id="NP_001081695.1">
    <property type="nucleotide sequence ID" value="NM_001088226.1"/>
</dbReference>
<dbReference type="SMR" id="O42583"/>
<dbReference type="GlyCosmos" id="O42583">
    <property type="glycosylation" value="1 site, No reported glycans"/>
</dbReference>
<dbReference type="DNASU" id="398002"/>
<dbReference type="GeneID" id="398002"/>
<dbReference type="KEGG" id="xla:398002"/>
<dbReference type="AGR" id="Xenbase:XB-GENE-17339014"/>
<dbReference type="CTD" id="398002"/>
<dbReference type="Xenbase" id="XB-GENE-17339014">
    <property type="gene designation" value="prph2.S"/>
</dbReference>
<dbReference type="OrthoDB" id="9836210at2759"/>
<dbReference type="Proteomes" id="UP000186698">
    <property type="component" value="Chromosome 5S"/>
</dbReference>
<dbReference type="Bgee" id="398002">
    <property type="expression patterns" value="Expressed in camera-type eye and 1 other cell type or tissue"/>
</dbReference>
<dbReference type="GO" id="GO:0005886">
    <property type="term" value="C:plasma membrane"/>
    <property type="evidence" value="ECO:0007669"/>
    <property type="project" value="TreeGrafter"/>
</dbReference>
<dbReference type="GO" id="GO:0007155">
    <property type="term" value="P:cell adhesion"/>
    <property type="evidence" value="ECO:0007669"/>
    <property type="project" value="UniProtKB-KW"/>
</dbReference>
<dbReference type="GO" id="GO:0007601">
    <property type="term" value="P:visual perception"/>
    <property type="evidence" value="ECO:0007669"/>
    <property type="project" value="InterPro"/>
</dbReference>
<dbReference type="CDD" id="cd03162">
    <property type="entry name" value="peripherin_like_LEL"/>
    <property type="match status" value="1"/>
</dbReference>
<dbReference type="FunFam" id="1.10.1450.10:FF:000002">
    <property type="entry name" value="Retinal outer segment membrane protein 1"/>
    <property type="match status" value="1"/>
</dbReference>
<dbReference type="Gene3D" id="1.10.1450.10">
    <property type="entry name" value="Tetraspanin"/>
    <property type="match status" value="1"/>
</dbReference>
<dbReference type="InterPro" id="IPR000830">
    <property type="entry name" value="Peripherin/rom-1"/>
</dbReference>
<dbReference type="InterPro" id="IPR018498">
    <property type="entry name" value="Peripherin/rom-1_CS"/>
</dbReference>
<dbReference type="InterPro" id="IPR042026">
    <property type="entry name" value="Peripherin_LEL"/>
</dbReference>
<dbReference type="InterPro" id="IPR018499">
    <property type="entry name" value="Tetraspanin/Peripherin"/>
</dbReference>
<dbReference type="InterPro" id="IPR008952">
    <property type="entry name" value="Tetraspanin_EC2_sf"/>
</dbReference>
<dbReference type="PANTHER" id="PTHR19282:SF202">
    <property type="entry name" value="PERIPHERIN-2"/>
    <property type="match status" value="1"/>
</dbReference>
<dbReference type="PANTHER" id="PTHR19282">
    <property type="entry name" value="TETRASPANIN"/>
    <property type="match status" value="1"/>
</dbReference>
<dbReference type="Pfam" id="PF00335">
    <property type="entry name" value="Tetraspanin"/>
    <property type="match status" value="1"/>
</dbReference>
<dbReference type="PRINTS" id="PR00218">
    <property type="entry name" value="PERIPHERNRDS"/>
</dbReference>
<dbReference type="SUPFAM" id="SSF48652">
    <property type="entry name" value="Tetraspanin"/>
    <property type="match status" value="1"/>
</dbReference>
<dbReference type="PROSITE" id="PS00930">
    <property type="entry name" value="RDS_ROM1"/>
    <property type="match status" value="1"/>
</dbReference>
<proteinExistence type="evidence at transcript level"/>
<protein>
    <recommendedName>
        <fullName>Peripherin-2</fullName>
    </recommendedName>
    <alternativeName>
        <fullName>Retinal degeneration slow protein</fullName>
        <shortName>xRDS38</shortName>
    </alternativeName>
</protein>